<dbReference type="EMBL" id="AE014075">
    <property type="protein sequence ID" value="AAN82348.1"/>
    <property type="molecule type" value="Genomic_DNA"/>
</dbReference>
<dbReference type="RefSeq" id="WP_000449449.1">
    <property type="nucleotide sequence ID" value="NZ_CP051263.1"/>
</dbReference>
<dbReference type="SMR" id="Q8FD95"/>
<dbReference type="STRING" id="199310.c3907"/>
<dbReference type="KEGG" id="ecc:c3907"/>
<dbReference type="eggNOG" id="COG3787">
    <property type="taxonomic scope" value="Bacteria"/>
</dbReference>
<dbReference type="HOGENOM" id="CLU_105087_3_0_6"/>
<dbReference type="BioCyc" id="ECOL199310:C3907-MONOMER"/>
<dbReference type="Proteomes" id="UP000001410">
    <property type="component" value="Chromosome"/>
</dbReference>
<dbReference type="FunFam" id="2.30.110.10:FF:000003">
    <property type="entry name" value="UPF0306 protein YhbP"/>
    <property type="match status" value="1"/>
</dbReference>
<dbReference type="Gene3D" id="2.30.110.10">
    <property type="entry name" value="Electron Transport, Fmn-binding Protein, Chain A"/>
    <property type="match status" value="1"/>
</dbReference>
<dbReference type="HAMAP" id="MF_00764">
    <property type="entry name" value="UPF0306"/>
    <property type="match status" value="1"/>
</dbReference>
<dbReference type="InterPro" id="IPR012349">
    <property type="entry name" value="Split_barrel_FMN-bd"/>
</dbReference>
<dbReference type="InterPro" id="IPR011194">
    <property type="entry name" value="UPF0306"/>
</dbReference>
<dbReference type="NCBIfam" id="NF002900">
    <property type="entry name" value="PRK03467.1"/>
    <property type="match status" value="1"/>
</dbReference>
<dbReference type="PIRSF" id="PIRSF009554">
    <property type="entry name" value="UCP009554"/>
    <property type="match status" value="1"/>
</dbReference>
<dbReference type="SUPFAM" id="SSF50475">
    <property type="entry name" value="FMN-binding split barrel"/>
    <property type="match status" value="1"/>
</dbReference>
<gene>
    <name evidence="1" type="primary">yhbP</name>
    <name type="ordered locus">c3907</name>
</gene>
<reference key="1">
    <citation type="journal article" date="2002" name="Proc. Natl. Acad. Sci. U.S.A.">
        <title>Extensive mosaic structure revealed by the complete genome sequence of uropathogenic Escherichia coli.</title>
        <authorList>
            <person name="Welch R.A."/>
            <person name="Burland V."/>
            <person name="Plunkett G. III"/>
            <person name="Redford P."/>
            <person name="Roesch P."/>
            <person name="Rasko D."/>
            <person name="Buckles E.L."/>
            <person name="Liou S.-R."/>
            <person name="Boutin A."/>
            <person name="Hackett J."/>
            <person name="Stroud D."/>
            <person name="Mayhew G.F."/>
            <person name="Rose D.J."/>
            <person name="Zhou S."/>
            <person name="Schwartz D.C."/>
            <person name="Perna N.T."/>
            <person name="Mobley H.L.T."/>
            <person name="Donnenberg M.S."/>
            <person name="Blattner F.R."/>
        </authorList>
    </citation>
    <scope>NUCLEOTIDE SEQUENCE [LARGE SCALE GENOMIC DNA]</scope>
    <source>
        <strain>CFT073 / ATCC 700928 / UPEC</strain>
    </source>
</reference>
<proteinExistence type="inferred from homology"/>
<feature type="chain" id="PRO_0000214867" description="UPF0306 protein YhbP">
    <location>
        <begin position="1"/>
        <end position="140"/>
    </location>
</feature>
<comment type="similarity">
    <text evidence="1">Belongs to the UPF0306 family.</text>
</comment>
<organism>
    <name type="scientific">Escherichia coli O6:H1 (strain CFT073 / ATCC 700928 / UPEC)</name>
    <dbReference type="NCBI Taxonomy" id="199310"/>
    <lineage>
        <taxon>Bacteria</taxon>
        <taxon>Pseudomonadati</taxon>
        <taxon>Pseudomonadota</taxon>
        <taxon>Gammaproteobacteria</taxon>
        <taxon>Enterobacterales</taxon>
        <taxon>Enterobacteriaceae</taxon>
        <taxon>Escherichia</taxon>
    </lineage>
</organism>
<evidence type="ECO:0000255" key="1">
    <source>
        <dbReference type="HAMAP-Rule" id="MF_00764"/>
    </source>
</evidence>
<accession>Q8FD95</accession>
<protein>
    <recommendedName>
        <fullName evidence="1">UPF0306 protein YhbP</fullName>
    </recommendedName>
</protein>
<name>YHBP_ECOL6</name>
<keyword id="KW-1185">Reference proteome</keyword>
<sequence length="140" mass="16073">METLTAISRWLAKQHVVTWCVQQEGELWCANAFYLFDAQKVAFYILTEEKTRHAQMSGPQAAIAGTVNGQPKTVALIRGVQFKGEIRRLEGEESDLARKAYNRRFPVARMLSAPVWEIRLDEIKFTDNTLGFGKKLVWQR</sequence>